<organism>
    <name type="scientific">Bacillus cereus (strain AH820)</name>
    <dbReference type="NCBI Taxonomy" id="405535"/>
    <lineage>
        <taxon>Bacteria</taxon>
        <taxon>Bacillati</taxon>
        <taxon>Bacillota</taxon>
        <taxon>Bacilli</taxon>
        <taxon>Bacillales</taxon>
        <taxon>Bacillaceae</taxon>
        <taxon>Bacillus</taxon>
        <taxon>Bacillus cereus group</taxon>
    </lineage>
</organism>
<proteinExistence type="inferred from homology"/>
<keyword id="KW-0067">ATP-binding</keyword>
<keyword id="KW-0963">Cytoplasm</keyword>
<keyword id="KW-0275">Fatty acid biosynthesis</keyword>
<keyword id="KW-0276">Fatty acid metabolism</keyword>
<keyword id="KW-0444">Lipid biosynthesis</keyword>
<keyword id="KW-0443">Lipid metabolism</keyword>
<keyword id="KW-0479">Metal-binding</keyword>
<keyword id="KW-0547">Nucleotide-binding</keyword>
<keyword id="KW-0808">Transferase</keyword>
<keyword id="KW-0862">Zinc</keyword>
<keyword id="KW-0863">Zinc-finger</keyword>
<accession>B7JRX4</accession>
<name>ACCD_BACC0</name>
<protein>
    <recommendedName>
        <fullName evidence="1">Acetyl-coenzyme A carboxylase carboxyl transferase subunit beta</fullName>
        <shortName evidence="1">ACCase subunit beta</shortName>
        <shortName evidence="1">Acetyl-CoA carboxylase carboxyltransferase subunit beta</shortName>
        <ecNumber evidence="1">2.1.3.15</ecNumber>
    </recommendedName>
</protein>
<reference key="1">
    <citation type="submission" date="2008-10" db="EMBL/GenBank/DDBJ databases">
        <title>Genome sequence of Bacillus cereus AH820.</title>
        <authorList>
            <person name="Dodson R.J."/>
            <person name="Durkin A.S."/>
            <person name="Rosovitz M.J."/>
            <person name="Rasko D.A."/>
            <person name="Hoffmaster A."/>
            <person name="Ravel J."/>
            <person name="Sutton G."/>
        </authorList>
    </citation>
    <scope>NUCLEOTIDE SEQUENCE [LARGE SCALE GENOMIC DNA]</scope>
    <source>
        <strain>AH820</strain>
    </source>
</reference>
<sequence>MLRDLFVKKKKYAAIPSEQVRKDVPDGVMTKCPKCKKIMYTKEVLKNLKVCVNCGYHHPMNAWERLDSILDEGSFREYDKEMVSLNPLEFPNYEEKLESDRKKTELNEAVVTGEGTIDDMLVVVAVMDSRFRMGSMGSVVGEKIARAVEKAYDLQVPFIIFTASGGARMQEGILSLMQMAKTSVALKKHSNAGGLFISVMTHPTTGGVSASFASLGDYNLAEPGALIGFAGRRVIEQTVREKLPEDFQTAEFLLEHGQLDAVVHRDDMRESLRKILEVHQGGEMAVWQS</sequence>
<comment type="function">
    <text evidence="1">Component of the acetyl coenzyme A carboxylase (ACC) complex. Biotin carboxylase (BC) catalyzes the carboxylation of biotin on its carrier protein (BCCP) and then the CO(2) group is transferred by the transcarboxylase to acetyl-CoA to form malonyl-CoA.</text>
</comment>
<comment type="catalytic activity">
    <reaction evidence="1">
        <text>N(6)-carboxybiotinyl-L-lysyl-[protein] + acetyl-CoA = N(6)-biotinyl-L-lysyl-[protein] + malonyl-CoA</text>
        <dbReference type="Rhea" id="RHEA:54728"/>
        <dbReference type="Rhea" id="RHEA-COMP:10505"/>
        <dbReference type="Rhea" id="RHEA-COMP:10506"/>
        <dbReference type="ChEBI" id="CHEBI:57288"/>
        <dbReference type="ChEBI" id="CHEBI:57384"/>
        <dbReference type="ChEBI" id="CHEBI:83144"/>
        <dbReference type="ChEBI" id="CHEBI:83145"/>
        <dbReference type="EC" id="2.1.3.15"/>
    </reaction>
</comment>
<comment type="cofactor">
    <cofactor evidence="1">
        <name>Zn(2+)</name>
        <dbReference type="ChEBI" id="CHEBI:29105"/>
    </cofactor>
    <text evidence="1">Binds 1 zinc ion per subunit.</text>
</comment>
<comment type="pathway">
    <text evidence="1">Lipid metabolism; malonyl-CoA biosynthesis; malonyl-CoA from acetyl-CoA: step 1/1.</text>
</comment>
<comment type="subunit">
    <text evidence="1">Acetyl-CoA carboxylase is a heterohexamer composed of biotin carboxyl carrier protein (AccB), biotin carboxylase (AccC) and two subunits each of ACCase subunit alpha (AccA) and ACCase subunit beta (AccD).</text>
</comment>
<comment type="subcellular location">
    <subcellularLocation>
        <location evidence="1">Cytoplasm</location>
    </subcellularLocation>
</comment>
<comment type="similarity">
    <text evidence="1">Belongs to the AccD/PCCB family.</text>
</comment>
<gene>
    <name evidence="1" type="primary">accD</name>
    <name type="ordered locus">BCAH820_4716</name>
</gene>
<evidence type="ECO:0000255" key="1">
    <source>
        <dbReference type="HAMAP-Rule" id="MF_01395"/>
    </source>
</evidence>
<evidence type="ECO:0000255" key="2">
    <source>
        <dbReference type="PROSITE-ProRule" id="PRU01136"/>
    </source>
</evidence>
<feature type="chain" id="PRO_0000389674" description="Acetyl-coenzyme A carboxylase carboxyl transferase subunit beta">
    <location>
        <begin position="1"/>
        <end position="289"/>
    </location>
</feature>
<feature type="domain" description="CoA carboxyltransferase N-terminal" evidence="2">
    <location>
        <begin position="28"/>
        <end position="289"/>
    </location>
</feature>
<feature type="zinc finger region" description="C4-type" evidence="1">
    <location>
        <begin position="32"/>
        <end position="54"/>
    </location>
</feature>
<feature type="binding site" evidence="1">
    <location>
        <position position="32"/>
    </location>
    <ligand>
        <name>Zn(2+)</name>
        <dbReference type="ChEBI" id="CHEBI:29105"/>
    </ligand>
</feature>
<feature type="binding site" evidence="1">
    <location>
        <position position="35"/>
    </location>
    <ligand>
        <name>Zn(2+)</name>
        <dbReference type="ChEBI" id="CHEBI:29105"/>
    </ligand>
</feature>
<feature type="binding site" evidence="1">
    <location>
        <position position="51"/>
    </location>
    <ligand>
        <name>Zn(2+)</name>
        <dbReference type="ChEBI" id="CHEBI:29105"/>
    </ligand>
</feature>
<feature type="binding site" evidence="1">
    <location>
        <position position="54"/>
    </location>
    <ligand>
        <name>Zn(2+)</name>
        <dbReference type="ChEBI" id="CHEBI:29105"/>
    </ligand>
</feature>
<dbReference type="EC" id="2.1.3.15" evidence="1"/>
<dbReference type="EMBL" id="CP001283">
    <property type="protein sequence ID" value="ACK88106.1"/>
    <property type="molecule type" value="Genomic_DNA"/>
</dbReference>
<dbReference type="RefSeq" id="WP_000942874.1">
    <property type="nucleotide sequence ID" value="NC_011773.1"/>
</dbReference>
<dbReference type="SMR" id="B7JRX4"/>
<dbReference type="GeneID" id="45024472"/>
<dbReference type="KEGG" id="bcu:BCAH820_4716"/>
<dbReference type="HOGENOM" id="CLU_015486_1_1_9"/>
<dbReference type="UniPathway" id="UPA00655">
    <property type="reaction ID" value="UER00711"/>
</dbReference>
<dbReference type="Proteomes" id="UP000001363">
    <property type="component" value="Chromosome"/>
</dbReference>
<dbReference type="GO" id="GO:0009317">
    <property type="term" value="C:acetyl-CoA carboxylase complex"/>
    <property type="evidence" value="ECO:0007669"/>
    <property type="project" value="InterPro"/>
</dbReference>
<dbReference type="GO" id="GO:0003989">
    <property type="term" value="F:acetyl-CoA carboxylase activity"/>
    <property type="evidence" value="ECO:0007669"/>
    <property type="project" value="InterPro"/>
</dbReference>
<dbReference type="GO" id="GO:0005524">
    <property type="term" value="F:ATP binding"/>
    <property type="evidence" value="ECO:0007669"/>
    <property type="project" value="UniProtKB-KW"/>
</dbReference>
<dbReference type="GO" id="GO:0016743">
    <property type="term" value="F:carboxyl- or carbamoyltransferase activity"/>
    <property type="evidence" value="ECO:0007669"/>
    <property type="project" value="UniProtKB-UniRule"/>
</dbReference>
<dbReference type="GO" id="GO:0008270">
    <property type="term" value="F:zinc ion binding"/>
    <property type="evidence" value="ECO:0007669"/>
    <property type="project" value="UniProtKB-UniRule"/>
</dbReference>
<dbReference type="GO" id="GO:0006633">
    <property type="term" value="P:fatty acid biosynthetic process"/>
    <property type="evidence" value="ECO:0007669"/>
    <property type="project" value="UniProtKB-KW"/>
</dbReference>
<dbReference type="GO" id="GO:2001295">
    <property type="term" value="P:malonyl-CoA biosynthetic process"/>
    <property type="evidence" value="ECO:0007669"/>
    <property type="project" value="UniProtKB-UniRule"/>
</dbReference>
<dbReference type="Gene3D" id="3.90.226.10">
    <property type="entry name" value="2-enoyl-CoA Hydratase, Chain A, domain 1"/>
    <property type="match status" value="1"/>
</dbReference>
<dbReference type="HAMAP" id="MF_01395">
    <property type="entry name" value="AcetylCoA_CT_beta"/>
    <property type="match status" value="1"/>
</dbReference>
<dbReference type="InterPro" id="IPR034733">
    <property type="entry name" value="AcCoA_carboxyl_beta"/>
</dbReference>
<dbReference type="InterPro" id="IPR000438">
    <property type="entry name" value="Acetyl_CoA_COase_Trfase_b_su"/>
</dbReference>
<dbReference type="InterPro" id="IPR029045">
    <property type="entry name" value="ClpP/crotonase-like_dom_sf"/>
</dbReference>
<dbReference type="InterPro" id="IPR011762">
    <property type="entry name" value="COA_CT_N"/>
</dbReference>
<dbReference type="InterPro" id="IPR041010">
    <property type="entry name" value="Znf-ACC"/>
</dbReference>
<dbReference type="NCBIfam" id="TIGR00515">
    <property type="entry name" value="accD"/>
    <property type="match status" value="1"/>
</dbReference>
<dbReference type="PANTHER" id="PTHR42995">
    <property type="entry name" value="ACETYL-COENZYME A CARBOXYLASE CARBOXYL TRANSFERASE SUBUNIT BETA, CHLOROPLASTIC"/>
    <property type="match status" value="1"/>
</dbReference>
<dbReference type="PANTHER" id="PTHR42995:SF5">
    <property type="entry name" value="ACETYL-COENZYME A CARBOXYLASE CARBOXYL TRANSFERASE SUBUNIT BETA, CHLOROPLASTIC"/>
    <property type="match status" value="1"/>
</dbReference>
<dbReference type="Pfam" id="PF01039">
    <property type="entry name" value="Carboxyl_trans"/>
    <property type="match status" value="1"/>
</dbReference>
<dbReference type="Pfam" id="PF17848">
    <property type="entry name" value="Zn_ribbon_ACC"/>
    <property type="match status" value="1"/>
</dbReference>
<dbReference type="PRINTS" id="PR01070">
    <property type="entry name" value="ACCCTRFRASEB"/>
</dbReference>
<dbReference type="SUPFAM" id="SSF52096">
    <property type="entry name" value="ClpP/crotonase"/>
    <property type="match status" value="1"/>
</dbReference>
<dbReference type="PROSITE" id="PS50980">
    <property type="entry name" value="COA_CT_NTER"/>
    <property type="match status" value="1"/>
</dbReference>